<gene>
    <name type="primary">ERGIC3</name>
</gene>
<reference key="1">
    <citation type="journal article" date="2005" name="BMC Genomics">
        <title>Characterization of 954 bovine full-CDS cDNA sequences.</title>
        <authorList>
            <person name="Harhay G.P."/>
            <person name="Sonstegard T.S."/>
            <person name="Keele J.W."/>
            <person name="Heaton M.P."/>
            <person name="Clawson M.L."/>
            <person name="Snelling W.M."/>
            <person name="Wiedmann R.T."/>
            <person name="Van Tassell C.P."/>
            <person name="Smith T.P.L."/>
        </authorList>
    </citation>
    <scope>NUCLEOTIDE SEQUENCE [LARGE SCALE MRNA] (ISOFORMS 1 AND 3)</scope>
</reference>
<reference key="2">
    <citation type="submission" date="2005-02" db="EMBL/GenBank/DDBJ databases">
        <authorList>
            <consortium name="NIH - Mammalian Gene Collection (MGC) project"/>
        </authorList>
    </citation>
    <scope>NUCLEOTIDE SEQUENCE [LARGE SCALE MRNA] (ISOFORM 2)</scope>
    <source>
        <strain>Crossbred X Angus</strain>
        <tissue>Ileum</tissue>
    </source>
</reference>
<dbReference type="EMBL" id="BT020628">
    <property type="protein sequence ID" value="AAX08645.1"/>
    <property type="molecule type" value="mRNA"/>
</dbReference>
<dbReference type="EMBL" id="BT020629">
    <property type="protein sequence ID" value="AAX08646.1"/>
    <property type="molecule type" value="mRNA"/>
</dbReference>
<dbReference type="EMBL" id="BT020688">
    <property type="protein sequence ID" value="AAX08705.1"/>
    <property type="molecule type" value="mRNA"/>
</dbReference>
<dbReference type="EMBL" id="BT021799">
    <property type="protein sequence ID" value="AAX46646.1"/>
    <property type="status" value="ALT_INIT"/>
    <property type="molecule type" value="mRNA"/>
</dbReference>
<dbReference type="EMBL" id="BT021881">
    <property type="protein sequence ID" value="AAX46728.1"/>
    <property type="molecule type" value="mRNA"/>
</dbReference>
<dbReference type="EMBL" id="BT026271">
    <property type="protein sequence ID" value="ABG81427.1"/>
    <property type="molecule type" value="mRNA"/>
</dbReference>
<dbReference type="EMBL" id="BC102326">
    <property type="protein sequence ID" value="AAI02327.1"/>
    <property type="molecule type" value="mRNA"/>
</dbReference>
<dbReference type="RefSeq" id="NP_001029525.2">
    <molecule id="Q5EAE0-1"/>
    <property type="nucleotide sequence ID" value="NM_001034353.2"/>
</dbReference>
<dbReference type="SMR" id="Q5EAE0"/>
<dbReference type="FunCoup" id="Q5EAE0">
    <property type="interactions" value="4317"/>
</dbReference>
<dbReference type="STRING" id="9913.ENSBTAP00000008782"/>
<dbReference type="GlyCosmos" id="Q5EAE0">
    <property type="glycosylation" value="1 site, No reported glycans"/>
</dbReference>
<dbReference type="GlyGen" id="Q5EAE0">
    <property type="glycosylation" value="1 site"/>
</dbReference>
<dbReference type="SwissPalm" id="Q5EAE0"/>
<dbReference type="Ensembl" id="ENSBTAT00000132583.1">
    <molecule id="Q5EAE0-2"/>
    <property type="protein sequence ID" value="ENSBTAP00000100325.1"/>
    <property type="gene ID" value="ENSBTAG00000006670.7"/>
</dbReference>
<dbReference type="GeneID" id="509546"/>
<dbReference type="KEGG" id="bta:509546"/>
<dbReference type="CTD" id="51614"/>
<dbReference type="VEuPathDB" id="HostDB:ENSBTAG00000006670"/>
<dbReference type="GeneTree" id="ENSGT00530000063113"/>
<dbReference type="InParanoid" id="Q5EAE0"/>
<dbReference type="OMA" id="QRHEGCR"/>
<dbReference type="OrthoDB" id="270930at2759"/>
<dbReference type="Proteomes" id="UP000009136">
    <property type="component" value="Chromosome 13"/>
</dbReference>
<dbReference type="Bgee" id="ENSBTAG00000006670">
    <property type="expression patterns" value="Expressed in theca cell and 109 other cell types or tissues"/>
</dbReference>
<dbReference type="GO" id="GO:0030134">
    <property type="term" value="C:COPII-coated ER to Golgi transport vesicle"/>
    <property type="evidence" value="ECO:0000318"/>
    <property type="project" value="GO_Central"/>
</dbReference>
<dbReference type="GO" id="GO:0005783">
    <property type="term" value="C:endoplasmic reticulum"/>
    <property type="evidence" value="ECO:0000318"/>
    <property type="project" value="GO_Central"/>
</dbReference>
<dbReference type="GO" id="GO:0005789">
    <property type="term" value="C:endoplasmic reticulum membrane"/>
    <property type="evidence" value="ECO:0000318"/>
    <property type="project" value="GO_Central"/>
</dbReference>
<dbReference type="GO" id="GO:0033116">
    <property type="term" value="C:endoplasmic reticulum-Golgi intermediate compartment membrane"/>
    <property type="evidence" value="ECO:0007669"/>
    <property type="project" value="UniProtKB-SubCell"/>
</dbReference>
<dbReference type="GO" id="GO:0000139">
    <property type="term" value="C:Golgi membrane"/>
    <property type="evidence" value="ECO:0000318"/>
    <property type="project" value="GO_Central"/>
</dbReference>
<dbReference type="GO" id="GO:0006888">
    <property type="term" value="P:endoplasmic reticulum to Golgi vesicle-mediated transport"/>
    <property type="evidence" value="ECO:0000318"/>
    <property type="project" value="GO_Central"/>
</dbReference>
<dbReference type="GO" id="GO:0090316">
    <property type="term" value="P:positive regulation of intracellular protein transport"/>
    <property type="evidence" value="ECO:0000250"/>
    <property type="project" value="UniProtKB"/>
</dbReference>
<dbReference type="GO" id="GO:0006890">
    <property type="term" value="P:retrograde vesicle-mediated transport, Golgi to endoplasmic reticulum"/>
    <property type="evidence" value="ECO:0000318"/>
    <property type="project" value="GO_Central"/>
</dbReference>
<dbReference type="InterPro" id="IPR045888">
    <property type="entry name" value="Erv"/>
</dbReference>
<dbReference type="InterPro" id="IPR012936">
    <property type="entry name" value="Erv_C"/>
</dbReference>
<dbReference type="InterPro" id="IPR039542">
    <property type="entry name" value="Erv_N"/>
</dbReference>
<dbReference type="PANTHER" id="PTHR10984">
    <property type="entry name" value="ENDOPLASMIC RETICULUM-GOLGI INTERMEDIATE COMPARTMENT PROTEIN"/>
    <property type="match status" value="1"/>
</dbReference>
<dbReference type="PANTHER" id="PTHR10984:SF25">
    <property type="entry name" value="ENDOPLASMIC RETICULUM-GOLGI INTERMEDIATE COMPARTMENT PROTEIN 3"/>
    <property type="match status" value="1"/>
</dbReference>
<dbReference type="Pfam" id="PF07970">
    <property type="entry name" value="COPIIcoated_ERV"/>
    <property type="match status" value="1"/>
</dbReference>
<dbReference type="Pfam" id="PF13850">
    <property type="entry name" value="ERGIC_N"/>
    <property type="match status" value="1"/>
</dbReference>
<accession>Q5EAE0</accession>
<accession>Q0V8E8</accession>
<accession>Q3T0M8</accession>
<accession>Q58CR6</accession>
<accession>Q58CZ8</accession>
<protein>
    <recommendedName>
        <fullName>Endoplasmic reticulum-Golgi intermediate compartment protein 3</fullName>
    </recommendedName>
</protein>
<feature type="chain" id="PRO_0000239387" description="Endoplasmic reticulum-Golgi intermediate compartment protein 3">
    <location>
        <begin position="1"/>
        <end position="383"/>
    </location>
</feature>
<feature type="topological domain" description="Cytoplasmic" evidence="3">
    <location>
        <begin position="1"/>
        <end position="25"/>
    </location>
</feature>
<feature type="transmembrane region" description="Helical" evidence="3">
    <location>
        <begin position="26"/>
        <end position="46"/>
    </location>
</feature>
<feature type="topological domain" description="Lumenal" evidence="3">
    <location>
        <begin position="47"/>
        <end position="341"/>
    </location>
</feature>
<feature type="transmembrane region" description="Helical" evidence="3">
    <location>
        <begin position="342"/>
        <end position="362"/>
    </location>
</feature>
<feature type="topological domain" description="Cytoplasmic" evidence="3">
    <location>
        <begin position="363"/>
        <end position="383"/>
    </location>
</feature>
<feature type="region of interest" description="Required for MARCHF2-mediated degradation" evidence="2">
    <location>
        <begin position="1"/>
        <end position="25"/>
    </location>
</feature>
<feature type="site" description="Ubiquitinated; by MARCHF2" evidence="2">
    <location>
        <position position="8"/>
    </location>
</feature>
<feature type="modified residue" description="N-acetylmethionine" evidence="2">
    <location>
        <position position="1"/>
    </location>
</feature>
<feature type="modified residue" description="Phosphoserine" evidence="2">
    <location>
        <position position="116"/>
    </location>
</feature>
<feature type="glycosylation site" description="N-linked (GlcNAc...) asparagine" evidence="3">
    <location>
        <position position="266"/>
    </location>
</feature>
<feature type="splice variant" id="VSP_019213" description="In isoform 2." evidence="5">
    <original>VHD</original>
    <variation>GLR</variation>
    <location>
        <begin position="229"/>
        <end position="231"/>
    </location>
</feature>
<feature type="splice variant" id="VSP_019214" description="In isoform 2." evidence="5">
    <location>
        <begin position="232"/>
        <end position="383"/>
    </location>
</feature>
<feature type="splice variant" id="VSP_019215" description="In isoform 3." evidence="4">
    <original>INMTHYIRHLSFGEDYPGIVNPLDHTNVTAPQASMMFQYFVKVV</original>
    <variation>VRTRWKPWRVDGGGGLVAAFILCRDILGWGSRYRTMNHGLTGAV</variation>
    <location>
        <begin position="240"/>
        <end position="283"/>
    </location>
</feature>
<feature type="splice variant" id="VSP_019216" description="In isoform 3." evidence="4">
    <location>
        <begin position="284"/>
        <end position="383"/>
    </location>
</feature>
<evidence type="ECO:0000250" key="1"/>
<evidence type="ECO:0000250" key="2">
    <source>
        <dbReference type="UniProtKB" id="Q9Y282"/>
    </source>
</evidence>
<evidence type="ECO:0000255" key="3"/>
<evidence type="ECO:0000303" key="4">
    <source>
    </source>
</evidence>
<evidence type="ECO:0000303" key="5">
    <source ref="2"/>
</evidence>
<evidence type="ECO:0000305" key="6"/>
<proteinExistence type="evidence at transcript level"/>
<sequence length="383" mass="43375">MEALGKLKQFDAYPKTLEDFRVKTCGGATVTIVSGLLMLLLFLSELQYYLTTEVHPELYVDKSRGDKLKININVLFPHMPCAYLSIDAMDVAGEQQLDVEHNLFKKRLDKDGFPVSSEAERHELGKVEVKVFDPDSLDPDRCESCYGAEMEDIKCCNSCEDVREAYRRRGWAFKNPDTIEQCRREGFSQKMQEQKNEGCQVYGFLEVNKVAGNFHFAPGKSFQQSHVHVHDLQSFGLDNINMTHYIRHLSFGEDYPGIVNPLDHTNVTAPQASMMFQYFVKVVPTVYMKVDGEVLRTNQFSVTRHEKVANGLMGDQGLPGVFVLYELSPMMVKLTEKHRSFTHFLTGVCAIIGGMFTVAGLIDSLIYHSARAIQKKIDLGKTT</sequence>
<organism>
    <name type="scientific">Bos taurus</name>
    <name type="common">Bovine</name>
    <dbReference type="NCBI Taxonomy" id="9913"/>
    <lineage>
        <taxon>Eukaryota</taxon>
        <taxon>Metazoa</taxon>
        <taxon>Chordata</taxon>
        <taxon>Craniata</taxon>
        <taxon>Vertebrata</taxon>
        <taxon>Euteleostomi</taxon>
        <taxon>Mammalia</taxon>
        <taxon>Eutheria</taxon>
        <taxon>Laurasiatheria</taxon>
        <taxon>Artiodactyla</taxon>
        <taxon>Ruminantia</taxon>
        <taxon>Pecora</taxon>
        <taxon>Bovidae</taxon>
        <taxon>Bovinae</taxon>
        <taxon>Bos</taxon>
    </lineage>
</organism>
<comment type="function">
    <text evidence="2">Possible role in transport between endoplasmic reticulum and Golgi. Positively regulates trafficking of the secretory proteins alpha1-antitrypsin/SERPINA1 and HP/haptoglobin (By similarity).</text>
</comment>
<comment type="subunit">
    <text evidence="2">Forms homodimers (By similarity). May form a heteromeric complex composed of ERGIC1, ERGIC2 and ERGIC3 (By similarity). Within the complex, the interaction with ERGIC1 is direct (By similarity). Interacts with ERGIC1/ERGIC32 (By similarity). Interacts with ERGIC2, the interaction is required for the stable expression of both proteins (By similarity). Interacts with MARCHF2 (By similarity). Interacts with SERPINA1/alpha1-antitrypsin and HP/haptoglobin (By similarity).</text>
</comment>
<comment type="subcellular location">
    <subcellularLocation>
        <location evidence="1">Endoplasmic reticulum-Golgi intermediate compartment membrane</location>
        <topology evidence="1">Multi-pass membrane protein</topology>
    </subcellularLocation>
    <subcellularLocation>
        <location evidence="1">Golgi apparatus</location>
        <location evidence="1">cis-Golgi network membrane</location>
        <topology evidence="1">Multi-pass membrane protein</topology>
    </subcellularLocation>
    <subcellularLocation>
        <location evidence="1">Endoplasmic reticulum membrane</location>
        <topology evidence="1">Multi-pass membrane protein</topology>
    </subcellularLocation>
    <text evidence="1">Cycles between the endoplasmic reticulum and the Golgi.</text>
</comment>
<comment type="alternative products">
    <event type="alternative splicing"/>
    <isoform>
        <id>Q5EAE0-1</id>
        <name>1</name>
        <sequence type="displayed"/>
    </isoform>
    <isoform>
        <id>Q5EAE0-2</id>
        <name>2</name>
        <sequence type="described" ref="VSP_019213 VSP_019214"/>
    </isoform>
    <isoform>
        <id>Q5EAE0-3</id>
        <name>3</name>
        <sequence type="described" ref="VSP_019215 VSP_019216"/>
    </isoform>
</comment>
<comment type="similarity">
    <text evidence="6">Belongs to the ERGIC family.</text>
</comment>
<comment type="sequence caution" evidence="6">
    <conflict type="erroneous initiation">
        <sequence resource="EMBL-CDS" id="AAX46646"/>
    </conflict>
</comment>
<keyword id="KW-0007">Acetylation</keyword>
<keyword id="KW-0025">Alternative splicing</keyword>
<keyword id="KW-0256">Endoplasmic reticulum</keyword>
<keyword id="KW-0931">ER-Golgi transport</keyword>
<keyword id="KW-0325">Glycoprotein</keyword>
<keyword id="KW-0333">Golgi apparatus</keyword>
<keyword id="KW-0472">Membrane</keyword>
<keyword id="KW-0597">Phosphoprotein</keyword>
<keyword id="KW-1185">Reference proteome</keyword>
<keyword id="KW-0812">Transmembrane</keyword>
<keyword id="KW-1133">Transmembrane helix</keyword>
<keyword id="KW-0813">Transport</keyword>
<name>ERGI3_BOVIN</name>